<gene>
    <name type="primary">N</name>
</gene>
<evidence type="ECO:0000250" key="1">
    <source>
        <dbReference type="UniProtKB" id="P03521"/>
    </source>
</evidence>
<evidence type="ECO:0000305" key="2"/>
<name>NCAP_VSIVG</name>
<sequence length="422" mass="47437">MSVTVKRIIDNTVIVPKLPANEDPVEYPADYFRKSKEIPLYINTTKSLSDLRGYVYQGLKSGNVSIIHVNSYLYGALKDIRGKLDKDWSSFGINIGKAGDTIGIFDLVSLKGLDGVLPDGVSDASRTRADDKWLPLYLLGLYRVGRTQMPEYRKKLMDGLTNQCKMINEQFEPLVPEGRDIFDVWGNDSNYTKIVAAVDMFFHMFKKHECASFRYGTIVSRFKDCAALATFGHLCKITGMSTEDVTTWILNREVADEMVQMMLPGQEIDKADSYMPYLIDFGLSSKSPYSSVKNPAFHFWGQLTALLLRSTRARNARQPDDIEYTSLTTAGLLYAYAVGSSADLAQQFCVGDSKYTPDDSTGGLTTNAPPQGRDVVEWLGWFEDQNRKPTPDMMQYAKRAVMSLQGLREKTIGKYAKSEFDK</sequence>
<organism>
    <name type="scientific">Vesicular stomatitis Indiana virus (strain Glasgow)</name>
    <name type="common">VSIV</name>
    <dbReference type="NCBI Taxonomy" id="11278"/>
    <lineage>
        <taxon>Viruses</taxon>
        <taxon>Riboviria</taxon>
        <taxon>Orthornavirae</taxon>
        <taxon>Negarnaviricota</taxon>
        <taxon>Haploviricotina</taxon>
        <taxon>Monjiviricetes</taxon>
        <taxon>Mononegavirales</taxon>
        <taxon>Rhabdoviridae</taxon>
        <taxon>Alpharhabdovirinae</taxon>
        <taxon>Vesiculovirus</taxon>
        <taxon>Vesiculovirus indiana</taxon>
    </lineage>
</organism>
<proteinExistence type="evidence at protein level"/>
<dbReference type="EMBL" id="M15213">
    <property type="protein sequence ID" value="AAA48376.1"/>
    <property type="molecule type" value="Genomic_RNA"/>
</dbReference>
<dbReference type="PIR" id="B26794">
    <property type="entry name" value="VHVNV4"/>
</dbReference>
<dbReference type="PDB" id="1KBG">
    <property type="method" value="X-ray"/>
    <property type="resolution" value="2.20 A"/>
    <property type="chains" value="P=52-59"/>
</dbReference>
<dbReference type="PDB" id="1NAM">
    <property type="method" value="X-ray"/>
    <property type="resolution" value="2.70 A"/>
    <property type="chains" value="P=52-59"/>
</dbReference>
<dbReference type="PDB" id="2MHA">
    <property type="method" value="X-ray"/>
    <property type="resolution" value="2.50 A"/>
    <property type="chains" value="E/F=52-59"/>
</dbReference>
<dbReference type="PDB" id="2VAA">
    <property type="method" value="X-ray"/>
    <property type="resolution" value="2.30 A"/>
    <property type="chains" value="P=52-59"/>
</dbReference>
<dbReference type="PDBsum" id="1KBG"/>
<dbReference type="PDBsum" id="1NAM"/>
<dbReference type="PDBsum" id="2MHA"/>
<dbReference type="PDBsum" id="2VAA"/>
<dbReference type="SMR" id="P11212"/>
<dbReference type="DIP" id="DIP-1087N"/>
<dbReference type="EvolutionaryTrace" id="P11212"/>
<dbReference type="Proteomes" id="UP000007544">
    <property type="component" value="Genome"/>
</dbReference>
<dbReference type="GO" id="GO:0019029">
    <property type="term" value="C:helical viral capsid"/>
    <property type="evidence" value="ECO:0007669"/>
    <property type="project" value="UniProtKB-KW"/>
</dbReference>
<dbReference type="GO" id="GO:0030430">
    <property type="term" value="C:host cell cytoplasm"/>
    <property type="evidence" value="ECO:0007669"/>
    <property type="project" value="UniProtKB-SubCell"/>
</dbReference>
<dbReference type="GO" id="GO:1990904">
    <property type="term" value="C:ribonucleoprotein complex"/>
    <property type="evidence" value="ECO:0007669"/>
    <property type="project" value="UniProtKB-KW"/>
</dbReference>
<dbReference type="GO" id="GO:0019013">
    <property type="term" value="C:viral nucleocapsid"/>
    <property type="evidence" value="ECO:0007669"/>
    <property type="project" value="UniProtKB-KW"/>
</dbReference>
<dbReference type="GO" id="GO:0003723">
    <property type="term" value="F:RNA binding"/>
    <property type="evidence" value="ECO:0007669"/>
    <property type="project" value="UniProtKB-KW"/>
</dbReference>
<dbReference type="FunFam" id="1.10.3610.10:FF:000001">
    <property type="entry name" value="Nucleoprotein"/>
    <property type="match status" value="1"/>
</dbReference>
<dbReference type="Gene3D" id="1.10.3610.10">
    <property type="entry name" value="Nucleoprotein"/>
    <property type="match status" value="1"/>
</dbReference>
<dbReference type="Gene3D" id="1.10.3570.10">
    <property type="entry name" value="Rhabdovirus nucleocapsid protein like domain"/>
    <property type="match status" value="1"/>
</dbReference>
<dbReference type="InterPro" id="IPR000448">
    <property type="entry name" value="Rhabdo_ncapsid"/>
</dbReference>
<dbReference type="InterPro" id="IPR023331">
    <property type="entry name" value="Rhabdovirus_ncapsid_C"/>
</dbReference>
<dbReference type="InterPro" id="IPR023330">
    <property type="entry name" value="Rhabdovirus_ncapsid_N"/>
</dbReference>
<dbReference type="InterPro" id="IPR035961">
    <property type="entry name" value="Rhabdovirus_nucleoprotein-like"/>
</dbReference>
<dbReference type="Pfam" id="PF00945">
    <property type="entry name" value="Rhabdo_ncap"/>
    <property type="match status" value="1"/>
</dbReference>
<dbReference type="SUPFAM" id="SSF140809">
    <property type="entry name" value="Rhabdovirus nucleoprotein-like"/>
    <property type="match status" value="1"/>
</dbReference>
<reference key="1">
    <citation type="journal article" date="1987" name="J. Virol.">
        <title>Continuing coevolution of virus and defective interfering particles and of viral genome sequences during undiluted passages: virus mutants exhibiting nearly complete resistance to formerly dominant defective interfering particles.</title>
        <authorList>
            <person name="Depolo N.J."/>
            <person name="Giachetti C."/>
            <person name="Holland J.J."/>
        </authorList>
    </citation>
    <scope>NUCLEOTIDE SEQUENCE [GENOMIC RNA]</scope>
</reference>
<organismHost>
    <name type="scientific">Aedes</name>
    <dbReference type="NCBI Taxonomy" id="7158"/>
</organismHost>
<organismHost>
    <name type="scientific">Bos taurus</name>
    <name type="common">Bovine</name>
    <dbReference type="NCBI Taxonomy" id="9913"/>
</organismHost>
<organismHost>
    <name type="scientific">Culicoides</name>
    <dbReference type="NCBI Taxonomy" id="58271"/>
</organismHost>
<organismHost>
    <name type="scientific">Equus asinus</name>
    <name type="common">Donkey</name>
    <name type="synonym">Equus africanus asinus</name>
    <dbReference type="NCBI Taxonomy" id="9793"/>
</organismHost>
<organismHost>
    <name type="scientific">Equus caballus</name>
    <name type="common">Horse</name>
    <dbReference type="NCBI Taxonomy" id="9796"/>
</organismHost>
<organismHost>
    <name type="scientific">Homo sapiens</name>
    <name type="common">Human</name>
    <dbReference type="NCBI Taxonomy" id="9606"/>
</organismHost>
<organismHost>
    <name type="scientific">Lutzomyia</name>
    <dbReference type="NCBI Taxonomy" id="252607"/>
</organismHost>
<organismHost>
    <name type="scientific">Musca domestica</name>
    <name type="common">House fly</name>
    <dbReference type="NCBI Taxonomy" id="7370"/>
</organismHost>
<organismHost>
    <name type="scientific">Simuliidae</name>
    <name type="common">black flies</name>
    <dbReference type="NCBI Taxonomy" id="7190"/>
</organismHost>
<organismHost>
    <name type="scientific">Sus scrofa</name>
    <name type="common">Pig</name>
    <dbReference type="NCBI Taxonomy" id="9823"/>
</organismHost>
<feature type="chain" id="PRO_0000222821" description="Nucleoprotein">
    <location>
        <begin position="1"/>
        <end position="422"/>
    </location>
</feature>
<feature type="region of interest" description="Interaction with the phosphoprotein" evidence="1">
    <location>
        <begin position="350"/>
        <end position="390"/>
    </location>
</feature>
<feature type="binding site" evidence="1">
    <location>
        <position position="143"/>
    </location>
    <ligand>
        <name>RNA</name>
        <dbReference type="ChEBI" id="CHEBI:33697"/>
    </ligand>
</feature>
<feature type="binding site" evidence="1">
    <location>
        <position position="152"/>
    </location>
    <ligand>
        <name>RNA</name>
        <dbReference type="ChEBI" id="CHEBI:33697"/>
    </ligand>
</feature>
<feature type="binding site" evidence="1">
    <location>
        <position position="206"/>
    </location>
    <ligand>
        <name>RNA</name>
        <dbReference type="ChEBI" id="CHEBI:33697"/>
    </ligand>
</feature>
<feature type="binding site" evidence="1">
    <location>
        <position position="214"/>
    </location>
    <ligand>
        <name>RNA</name>
        <dbReference type="ChEBI" id="CHEBI:33697"/>
    </ligand>
</feature>
<feature type="binding site" evidence="1">
    <location>
        <position position="286"/>
    </location>
    <ligand>
        <name>RNA</name>
        <dbReference type="ChEBI" id="CHEBI:33697"/>
    </ligand>
</feature>
<feature type="binding site" evidence="1">
    <location>
        <position position="317"/>
    </location>
    <ligand>
        <name>RNA</name>
        <dbReference type="ChEBI" id="CHEBI:33697"/>
    </ligand>
</feature>
<feature type="binding site" evidence="1">
    <location>
        <position position="408"/>
    </location>
    <ligand>
        <name>RNA</name>
        <dbReference type="ChEBI" id="CHEBI:33697"/>
    </ligand>
</feature>
<keyword id="KW-0002">3D-structure</keyword>
<keyword id="KW-0167">Capsid protein</keyword>
<keyword id="KW-1139">Helical capsid protein</keyword>
<keyword id="KW-1035">Host cytoplasm</keyword>
<keyword id="KW-0687">Ribonucleoprotein</keyword>
<keyword id="KW-0694">RNA-binding</keyword>
<keyword id="KW-0543">Viral nucleoprotein</keyword>
<keyword id="KW-0946">Virion</keyword>
<protein>
    <recommendedName>
        <fullName>Nucleoprotein</fullName>
        <shortName>NP</shortName>
    </recommendedName>
    <alternativeName>
        <fullName>Nucleocapsid protein</fullName>
        <shortName>Protein N</shortName>
    </alternativeName>
</protein>
<accession>P11212</accession>
<comment type="function">
    <text evidence="1">Encapsidates the genome in a ratio of one N per nine ribonucleotides, protecting it from nucleases. The encapsidated genomic RNA is termed the NC and serves as template for transcription and replication. The nucleocapsid is bullet-shaped with the tip containing 8 turns of a conical spiral before reaching the helical cylindrical trunk. Nucleocapsid assembly is concomitant with replication, therefore viral replication depends on the intracellular concentration of free N, termed N(0). All replicative products are resistant to nucleases.</text>
</comment>
<comment type="subunit">
    <text evidence="1">Homomultimerizes to form the nucleocapsid. Binds to viral genomic RNA; this interaction contributes to the virion assembly. N in the nucleocapsid interacts (via C-terminus) with the P protein (via C-terminus); this interaction allows to package the L polymerase in the virion and positions the polymerase on the template, since P acts as a bridge between N and L. N(0) interacts with the P protein; this interaction prevents the uncontrolled aggregation of N(0). Interacts with the matrix protein (inner layer); this interaction contributes to the virion assembly. Interacts with the L polymerase.</text>
</comment>
<comment type="subcellular location">
    <subcellularLocation>
        <location evidence="1">Virion</location>
    </subcellularLocation>
    <subcellularLocation>
        <location evidence="1">Host cytoplasm</location>
    </subcellularLocation>
    <text evidence="1">The nucleocapsid is synthesized in the cytoplasm, and is subsequently transported via microtubules to the cell periphery. About 1240 copies of N are present in the virion.</text>
</comment>
<comment type="similarity">
    <text evidence="2">Belongs to the vesiculovirus nucleocapsid protein family.</text>
</comment>